<accession>Q3T0T1</accession>
<dbReference type="EC" id="3.4.25.1"/>
<dbReference type="EMBL" id="BC102272">
    <property type="protein sequence ID" value="AAI02273.1"/>
    <property type="molecule type" value="mRNA"/>
</dbReference>
<dbReference type="RefSeq" id="NP_001029212.1">
    <property type="nucleotide sequence ID" value="NM_001034040.2"/>
</dbReference>
<dbReference type="PDB" id="7DR6">
    <property type="method" value="EM"/>
    <property type="resolution" value="4.10 A"/>
    <property type="chains" value="1/X=1-273"/>
</dbReference>
<dbReference type="PDB" id="7DR7">
    <property type="method" value="EM"/>
    <property type="resolution" value="3.30 A"/>
    <property type="chains" value="1/X=1-273"/>
</dbReference>
<dbReference type="PDB" id="7DRW">
    <property type="method" value="EM"/>
    <property type="resolution" value="4.20 A"/>
    <property type="chains" value="1/X=1-273"/>
</dbReference>
<dbReference type="PDBsum" id="7DR6"/>
<dbReference type="PDBsum" id="7DR7"/>
<dbReference type="PDBsum" id="7DRW"/>
<dbReference type="EMDB" id="EMD-30824"/>
<dbReference type="EMDB" id="EMD-30825"/>
<dbReference type="EMDB" id="EMD-30828"/>
<dbReference type="SMR" id="Q3T0T1"/>
<dbReference type="FunCoup" id="Q3T0T1">
    <property type="interactions" value="308"/>
</dbReference>
<dbReference type="IntAct" id="Q3T0T1">
    <property type="interactions" value="1"/>
</dbReference>
<dbReference type="STRING" id="9913.ENSBTAP00000063146"/>
<dbReference type="MEROPS" id="T01.014"/>
<dbReference type="PaxDb" id="9913-ENSBTAP00000024015"/>
<dbReference type="PeptideAtlas" id="Q3T0T1"/>
<dbReference type="Ensembl" id="ENSBTAT00000024015.6">
    <property type="protein sequence ID" value="ENSBTAP00000024015.5"/>
    <property type="gene ID" value="ENSBTAG00000018040.7"/>
</dbReference>
<dbReference type="GeneID" id="282328"/>
<dbReference type="KEGG" id="bta:282328"/>
<dbReference type="CTD" id="5699"/>
<dbReference type="VEuPathDB" id="HostDB:ENSBTAG00000018040"/>
<dbReference type="VGNC" id="VGNC:97305">
    <property type="gene designation" value="PSMB10"/>
</dbReference>
<dbReference type="eggNOG" id="KOG0173">
    <property type="taxonomic scope" value="Eukaryota"/>
</dbReference>
<dbReference type="GeneTree" id="ENSGT00940000161047"/>
<dbReference type="HOGENOM" id="CLU_035750_3_0_1"/>
<dbReference type="InParanoid" id="Q3T0T1"/>
<dbReference type="OMA" id="GTQVDLC"/>
<dbReference type="OrthoDB" id="429533at2759"/>
<dbReference type="TreeFam" id="TF106222"/>
<dbReference type="Reactome" id="R-BTA-9907900">
    <property type="pathway name" value="Proteasome assembly"/>
</dbReference>
<dbReference type="Proteomes" id="UP000009136">
    <property type="component" value="Chromosome 18"/>
</dbReference>
<dbReference type="Bgee" id="ENSBTAG00000018040">
    <property type="expression patterns" value="Expressed in blood and 106 other cell types or tissues"/>
</dbReference>
<dbReference type="GO" id="GO:0005829">
    <property type="term" value="C:cytosol"/>
    <property type="evidence" value="ECO:0000318"/>
    <property type="project" value="GO_Central"/>
</dbReference>
<dbReference type="GO" id="GO:0005634">
    <property type="term" value="C:nucleus"/>
    <property type="evidence" value="ECO:0000318"/>
    <property type="project" value="GO_Central"/>
</dbReference>
<dbReference type="GO" id="GO:0005839">
    <property type="term" value="C:proteasome core complex"/>
    <property type="evidence" value="ECO:0000250"/>
    <property type="project" value="UniProtKB"/>
</dbReference>
<dbReference type="GO" id="GO:0019774">
    <property type="term" value="C:proteasome core complex, beta-subunit complex"/>
    <property type="evidence" value="ECO:0000250"/>
    <property type="project" value="UniProtKB"/>
</dbReference>
<dbReference type="GO" id="GO:1990111">
    <property type="term" value="C:spermatoproteasome complex"/>
    <property type="evidence" value="ECO:0000250"/>
    <property type="project" value="UniProtKB"/>
</dbReference>
<dbReference type="GO" id="GO:0004175">
    <property type="term" value="F:endopeptidase activity"/>
    <property type="evidence" value="ECO:0000318"/>
    <property type="project" value="GO_Central"/>
</dbReference>
<dbReference type="GO" id="GO:0004298">
    <property type="term" value="F:threonine-type endopeptidase activity"/>
    <property type="evidence" value="ECO:0007669"/>
    <property type="project" value="UniProtKB-KW"/>
</dbReference>
<dbReference type="GO" id="GO:0000902">
    <property type="term" value="P:cell morphogenesis"/>
    <property type="evidence" value="ECO:0007669"/>
    <property type="project" value="Ensembl"/>
</dbReference>
<dbReference type="GO" id="GO:0043161">
    <property type="term" value="P:proteasome-mediated ubiquitin-dependent protein catabolic process"/>
    <property type="evidence" value="ECO:0000318"/>
    <property type="project" value="GO_Central"/>
</dbReference>
<dbReference type="GO" id="GO:0042098">
    <property type="term" value="P:T cell proliferation"/>
    <property type="evidence" value="ECO:0007669"/>
    <property type="project" value="Ensembl"/>
</dbReference>
<dbReference type="CDD" id="cd03763">
    <property type="entry name" value="proteasome_beta_type_7"/>
    <property type="match status" value="1"/>
</dbReference>
<dbReference type="FunFam" id="3.60.20.10:FF:000005">
    <property type="entry name" value="Proteasome subunit beta type-2"/>
    <property type="match status" value="1"/>
</dbReference>
<dbReference type="Gene3D" id="3.60.20.10">
    <property type="entry name" value="Glutamine Phosphoribosylpyrophosphate, subunit 1, domain 1"/>
    <property type="match status" value="1"/>
</dbReference>
<dbReference type="InterPro" id="IPR029055">
    <property type="entry name" value="Ntn_hydrolases_N"/>
</dbReference>
<dbReference type="InterPro" id="IPR000243">
    <property type="entry name" value="Pept_T1A_subB"/>
</dbReference>
<dbReference type="InterPro" id="IPR024689">
    <property type="entry name" value="Proteasome_bsu_C"/>
</dbReference>
<dbReference type="InterPro" id="IPR016050">
    <property type="entry name" value="Proteasome_bsu_CS"/>
</dbReference>
<dbReference type="InterPro" id="IPR001353">
    <property type="entry name" value="Proteasome_sua/b"/>
</dbReference>
<dbReference type="InterPro" id="IPR023333">
    <property type="entry name" value="Proteasome_suB-type"/>
</dbReference>
<dbReference type="PANTHER" id="PTHR32194">
    <property type="entry name" value="METALLOPROTEASE TLDD"/>
    <property type="match status" value="1"/>
</dbReference>
<dbReference type="PANTHER" id="PTHR32194:SF4">
    <property type="entry name" value="PROTEASOME SUBUNIT BETA TYPE-7"/>
    <property type="match status" value="1"/>
</dbReference>
<dbReference type="Pfam" id="PF12465">
    <property type="entry name" value="Pr_beta_C"/>
    <property type="match status" value="1"/>
</dbReference>
<dbReference type="Pfam" id="PF00227">
    <property type="entry name" value="Proteasome"/>
    <property type="match status" value="1"/>
</dbReference>
<dbReference type="PRINTS" id="PR00141">
    <property type="entry name" value="PROTEASOME"/>
</dbReference>
<dbReference type="SUPFAM" id="SSF56235">
    <property type="entry name" value="N-terminal nucleophile aminohydrolases (Ntn hydrolases)"/>
    <property type="match status" value="1"/>
</dbReference>
<dbReference type="PROSITE" id="PS00854">
    <property type="entry name" value="PROTEASOME_BETA_1"/>
    <property type="match status" value="1"/>
</dbReference>
<dbReference type="PROSITE" id="PS51476">
    <property type="entry name" value="PROTEASOME_BETA_2"/>
    <property type="match status" value="1"/>
</dbReference>
<organism>
    <name type="scientific">Bos taurus</name>
    <name type="common">Bovine</name>
    <dbReference type="NCBI Taxonomy" id="9913"/>
    <lineage>
        <taxon>Eukaryota</taxon>
        <taxon>Metazoa</taxon>
        <taxon>Chordata</taxon>
        <taxon>Craniata</taxon>
        <taxon>Vertebrata</taxon>
        <taxon>Euteleostomi</taxon>
        <taxon>Mammalia</taxon>
        <taxon>Eutheria</taxon>
        <taxon>Laurasiatheria</taxon>
        <taxon>Artiodactyla</taxon>
        <taxon>Ruminantia</taxon>
        <taxon>Pecora</taxon>
        <taxon>Bovidae</taxon>
        <taxon>Bovinae</taxon>
        <taxon>Bos</taxon>
    </lineage>
</organism>
<proteinExistence type="evidence at protein level"/>
<keyword id="KW-0002">3D-structure</keyword>
<keyword id="KW-0007">Acetylation</keyword>
<keyword id="KW-0963">Cytoplasm</keyword>
<keyword id="KW-0378">Hydrolase</keyword>
<keyword id="KW-0539">Nucleus</keyword>
<keyword id="KW-0597">Phosphoprotein</keyword>
<keyword id="KW-0645">Protease</keyword>
<keyword id="KW-0647">Proteasome</keyword>
<keyword id="KW-1185">Reference proteome</keyword>
<keyword id="KW-0888">Threonine protease</keyword>
<keyword id="KW-0865">Zymogen</keyword>
<comment type="function">
    <text evidence="1">The proteasome is a multicatalytic proteinase complex which is characterized by its ability to cleave peptides with Arg, Phe, Tyr, Leu, and Glu adjacent to the leaving group at neutral or slightly basic pH. The proteasome has an ATP-dependent proteolytic activity. This subunit is involved in antigen processing to generate class I binding peptides (By similarity).</text>
</comment>
<comment type="catalytic activity">
    <reaction>
        <text>Cleavage of peptide bonds with very broad specificity.</text>
        <dbReference type="EC" id="3.4.25.1"/>
    </reaction>
</comment>
<comment type="subunit">
    <text>The 26S proteasome consists of a 20S proteasome core and two 19S regulatory subunits. The 20S proteasome core is composed of 28 subunits that are arranged in four stacked rings, resulting in a barrel-shaped structure. The two end rings are each formed by seven alpha subunits, and the two central rings are each formed by seven beta subunits. The catalytic chamber with the active sites is on the inside of the barrel. Component of the immunoproteasome, where it displaces the equivalent housekeeping subunit PSMB7. Component of the spermatoproteasome, a form of the proteasome specifically found in testis.</text>
</comment>
<comment type="subcellular location">
    <subcellularLocation>
        <location evidence="4">Cytoplasm</location>
    </subcellularLocation>
    <subcellularLocation>
        <location evidence="1">Nucleus</location>
    </subcellularLocation>
</comment>
<comment type="induction">
    <text>Up-regulated by interferon gamma (at protein level).</text>
</comment>
<comment type="PTM">
    <text evidence="2">Autocleaved. The resulting N-terminal Thr residue of the mature subunit is responsible for the nucleophile proteolytic activity.</text>
</comment>
<comment type="similarity">
    <text evidence="4">Belongs to the peptidase T1B family.</text>
</comment>
<name>PSB10_BOVIN</name>
<protein>
    <recommendedName>
        <fullName>Proteasome subunit beta type-10</fullName>
        <ecNumber>3.4.25.1</ecNumber>
    </recommendedName>
    <alternativeName>
        <fullName>Proteasome subunit beta-2i</fullName>
    </alternativeName>
</protein>
<sequence>MQKTVLEPQRGFSFENCERNAALQRALPGLRVPHARKTGTTIAGLVFQDGVILGADTRATNDSVVADKICEKIHFIAPKIYCCGAGVAADAEMTTRMAASNMELHALSTGRECRVATVTRMLRQTLFRYQGYVGASLIVGGVDFTGPQLYSVHPHGSYSRLPFTALGSGQDAAIAVLEDRFQPNMTLEAAQELLVEAITAGILGDLGSGGNVDACVITAAGAKMLRALSSPTKPIERSSQYRFAPGTTPVLSQTVVPLTLELVEETVQAMDVE</sequence>
<evidence type="ECO:0000250" key="1"/>
<evidence type="ECO:0000250" key="2">
    <source>
        <dbReference type="UniProtKB" id="O35955"/>
    </source>
</evidence>
<evidence type="ECO:0000250" key="3">
    <source>
        <dbReference type="UniProtKB" id="P40306"/>
    </source>
</evidence>
<evidence type="ECO:0000255" key="4">
    <source>
        <dbReference type="PROSITE-ProRule" id="PRU00809"/>
    </source>
</evidence>
<evidence type="ECO:0007829" key="5">
    <source>
        <dbReference type="PDB" id="7DR7"/>
    </source>
</evidence>
<gene>
    <name type="primary">PSMB10</name>
</gene>
<feature type="propeptide" id="PRO_0000239850" description="Removed in mature form" evidence="1">
    <location>
        <begin position="1"/>
        <end position="39"/>
    </location>
</feature>
<feature type="chain" id="PRO_0000239851" description="Proteasome subunit beta type-10">
    <location>
        <begin position="40"/>
        <end position="273"/>
    </location>
</feature>
<feature type="active site" description="Nucleophile" evidence="1">
    <location>
        <position position="40"/>
    </location>
</feature>
<feature type="site" description="Cleavage; by autolysis" evidence="2">
    <location>
        <begin position="39"/>
        <end position="40"/>
    </location>
</feature>
<feature type="modified residue" description="N-acetylmethionine" evidence="3">
    <location>
        <position position="1"/>
    </location>
</feature>
<feature type="modified residue" description="Phosphoserine" evidence="3">
    <location>
        <position position="230"/>
    </location>
</feature>
<feature type="strand" evidence="5">
    <location>
        <begin position="41"/>
        <end position="46"/>
    </location>
</feature>
<feature type="strand" evidence="5">
    <location>
        <begin position="51"/>
        <end position="56"/>
    </location>
</feature>
<feature type="strand" evidence="5">
    <location>
        <begin position="59"/>
        <end position="68"/>
    </location>
</feature>
<feature type="strand" evidence="5">
    <location>
        <begin position="73"/>
        <end position="77"/>
    </location>
</feature>
<feature type="strand" evidence="5">
    <location>
        <begin position="80"/>
        <end position="87"/>
    </location>
</feature>
<feature type="turn" evidence="5">
    <location>
        <begin position="88"/>
        <end position="92"/>
    </location>
</feature>
<feature type="helix" evidence="5">
    <location>
        <begin position="93"/>
        <end position="109"/>
    </location>
</feature>
<feature type="helix" evidence="5">
    <location>
        <begin position="115"/>
        <end position="128"/>
    </location>
</feature>
<feature type="turn" evidence="5">
    <location>
        <begin position="129"/>
        <end position="131"/>
    </location>
</feature>
<feature type="strand" evidence="5">
    <location>
        <begin position="136"/>
        <end position="143"/>
    </location>
</feature>
<feature type="strand" evidence="5">
    <location>
        <begin position="146"/>
        <end position="149"/>
    </location>
</feature>
<feature type="strand" evidence="5">
    <location>
        <begin position="162"/>
        <end position="167"/>
    </location>
</feature>
<feature type="helix" evidence="5">
    <location>
        <begin position="170"/>
        <end position="180"/>
    </location>
</feature>
<feature type="helix" evidence="5">
    <location>
        <begin position="187"/>
        <end position="202"/>
    </location>
</feature>
<feature type="strand" evidence="5">
    <location>
        <begin position="212"/>
        <end position="217"/>
    </location>
</feature>
<feature type="strand" evidence="5">
    <location>
        <begin position="223"/>
        <end position="229"/>
    </location>
</feature>
<feature type="strand" evidence="5">
    <location>
        <begin position="254"/>
        <end position="257"/>
    </location>
</feature>
<reference key="1">
    <citation type="submission" date="2005-08" db="EMBL/GenBank/DDBJ databases">
        <authorList>
            <consortium name="NIH - Mammalian Gene Collection (MGC) project"/>
        </authorList>
    </citation>
    <scope>NUCLEOTIDE SEQUENCE [LARGE SCALE MRNA]</scope>
    <source>
        <strain>Crossbred X Angus</strain>
        <tissue>Ileum</tissue>
    </source>
</reference>